<organism>
    <name type="scientific">Mus musculus</name>
    <name type="common">Mouse</name>
    <dbReference type="NCBI Taxonomy" id="10090"/>
    <lineage>
        <taxon>Eukaryota</taxon>
        <taxon>Metazoa</taxon>
        <taxon>Chordata</taxon>
        <taxon>Craniata</taxon>
        <taxon>Vertebrata</taxon>
        <taxon>Euteleostomi</taxon>
        <taxon>Mammalia</taxon>
        <taxon>Eutheria</taxon>
        <taxon>Euarchontoglires</taxon>
        <taxon>Glires</taxon>
        <taxon>Rodentia</taxon>
        <taxon>Myomorpha</taxon>
        <taxon>Muroidea</taxon>
        <taxon>Muridae</taxon>
        <taxon>Murinae</taxon>
        <taxon>Mus</taxon>
        <taxon>Mus</taxon>
    </lineage>
</organism>
<dbReference type="EMBL" id="AK011503">
    <property type="protein sequence ID" value="BAB27663.1"/>
    <property type="molecule type" value="mRNA"/>
</dbReference>
<dbReference type="EMBL" id="AK012817">
    <property type="protein sequence ID" value="BAB28490.2"/>
    <property type="status" value="ALT_INIT"/>
    <property type="molecule type" value="mRNA"/>
</dbReference>
<dbReference type="EMBL" id="BC003848">
    <property type="protein sequence ID" value="AAH03848.1"/>
    <property type="molecule type" value="mRNA"/>
</dbReference>
<dbReference type="CCDS" id="CCDS38292.1"/>
<dbReference type="RefSeq" id="NP_080306.1">
    <property type="nucleotide sequence ID" value="NM_026030.2"/>
</dbReference>
<dbReference type="SMR" id="Q99L45"/>
<dbReference type="BioGRID" id="212014">
    <property type="interactions" value="33"/>
</dbReference>
<dbReference type="FunCoup" id="Q99L45">
    <property type="interactions" value="3544"/>
</dbReference>
<dbReference type="IntAct" id="Q99L45">
    <property type="interactions" value="4"/>
</dbReference>
<dbReference type="MINT" id="Q99L45"/>
<dbReference type="STRING" id="10090.ENSMUSP00000096777"/>
<dbReference type="ChEMBL" id="CHEMBL4879504"/>
<dbReference type="GlyGen" id="Q99L45">
    <property type="glycosylation" value="1 site, 1 O-linked glycan (1 site)"/>
</dbReference>
<dbReference type="iPTMnet" id="Q99L45"/>
<dbReference type="MetOSite" id="Q99L45"/>
<dbReference type="PhosphoSitePlus" id="Q99L45"/>
<dbReference type="SwissPalm" id="Q99L45"/>
<dbReference type="jPOST" id="Q99L45"/>
<dbReference type="PaxDb" id="10090-ENSMUSP00000096777"/>
<dbReference type="ProteomicsDB" id="267096"/>
<dbReference type="Pumba" id="Q99L45"/>
<dbReference type="Antibodypedia" id="25771">
    <property type="antibodies" value="346 antibodies from 31 providers"/>
</dbReference>
<dbReference type="DNASU" id="67204"/>
<dbReference type="Ensembl" id="ENSMUST00000099173.11">
    <property type="protein sequence ID" value="ENSMUSP00000096777.5"/>
    <property type="gene ID" value="ENSMUSG00000074656.14"/>
</dbReference>
<dbReference type="GeneID" id="67204"/>
<dbReference type="KEGG" id="mmu:67204"/>
<dbReference type="UCSC" id="uc008njw.1">
    <property type="organism name" value="mouse"/>
</dbReference>
<dbReference type="AGR" id="MGI:1914454"/>
<dbReference type="CTD" id="8894"/>
<dbReference type="MGI" id="MGI:1914454">
    <property type="gene designation" value="Eif2s2"/>
</dbReference>
<dbReference type="VEuPathDB" id="HostDB:ENSMUSG00000074656"/>
<dbReference type="eggNOG" id="KOG2768">
    <property type="taxonomic scope" value="Eukaryota"/>
</dbReference>
<dbReference type="GeneTree" id="ENSGT00390000001804"/>
<dbReference type="HOGENOM" id="CLU_026663_0_1_1"/>
<dbReference type="InParanoid" id="Q99L45"/>
<dbReference type="OMA" id="CMREGNK"/>
<dbReference type="OrthoDB" id="10255414at2759"/>
<dbReference type="PhylomeDB" id="Q99L45"/>
<dbReference type="TreeFam" id="TF101503"/>
<dbReference type="Reactome" id="R-MMU-156827">
    <property type="pathway name" value="L13a-mediated translational silencing of Ceruloplasmin expression"/>
</dbReference>
<dbReference type="Reactome" id="R-MMU-381042">
    <property type="pathway name" value="PERK regulates gene expression"/>
</dbReference>
<dbReference type="Reactome" id="R-MMU-382556">
    <property type="pathway name" value="ABC-family proteins mediated transport"/>
</dbReference>
<dbReference type="Reactome" id="R-MMU-72649">
    <property type="pathway name" value="Translation initiation complex formation"/>
</dbReference>
<dbReference type="Reactome" id="R-MMU-72695">
    <property type="pathway name" value="Formation of the ternary complex, and subsequently, the 43S complex"/>
</dbReference>
<dbReference type="Reactome" id="R-MMU-72702">
    <property type="pathway name" value="Ribosomal scanning and start codon recognition"/>
</dbReference>
<dbReference type="Reactome" id="R-MMU-72706">
    <property type="pathway name" value="GTP hydrolysis and joining of the 60S ribosomal subunit"/>
</dbReference>
<dbReference type="Reactome" id="R-MMU-72731">
    <property type="pathway name" value="Recycling of eIF2:GDP"/>
</dbReference>
<dbReference type="Reactome" id="R-MMU-9840373">
    <property type="pathway name" value="Cellular response to mitochondrial stress"/>
</dbReference>
<dbReference type="BioGRID-ORCS" id="67204">
    <property type="hits" value="23 hits in 78 CRISPR screens"/>
</dbReference>
<dbReference type="CD-CODE" id="764D0258">
    <property type="entry name" value="Neuronal RNP granule"/>
</dbReference>
<dbReference type="ChiTaRS" id="Eif2s2">
    <property type="organism name" value="mouse"/>
</dbReference>
<dbReference type="PRO" id="PR:Q99L45"/>
<dbReference type="Proteomes" id="UP000000589">
    <property type="component" value="Chromosome 2"/>
</dbReference>
<dbReference type="RNAct" id="Q99L45">
    <property type="molecule type" value="protein"/>
</dbReference>
<dbReference type="Bgee" id="ENSMUSG00000074656">
    <property type="expression patterns" value="Expressed in blastoderm cell in morula and 262 other cell types or tissues"/>
</dbReference>
<dbReference type="ExpressionAtlas" id="Q99L45">
    <property type="expression patterns" value="baseline and differential"/>
</dbReference>
<dbReference type="GO" id="GO:0005829">
    <property type="term" value="C:cytosol"/>
    <property type="evidence" value="ECO:0007669"/>
    <property type="project" value="UniProtKB-SubCell"/>
</dbReference>
<dbReference type="GO" id="GO:0005850">
    <property type="term" value="C:eukaryotic translation initiation factor 2 complex"/>
    <property type="evidence" value="ECO:0000250"/>
    <property type="project" value="UniProtKB"/>
</dbReference>
<dbReference type="GO" id="GO:0045202">
    <property type="term" value="C:synapse"/>
    <property type="evidence" value="ECO:0000314"/>
    <property type="project" value="SynGO"/>
</dbReference>
<dbReference type="GO" id="GO:0003743">
    <property type="term" value="F:translation initiation factor activity"/>
    <property type="evidence" value="ECO:0000250"/>
    <property type="project" value="UniProtKB"/>
</dbReference>
<dbReference type="GO" id="GO:0008270">
    <property type="term" value="F:zinc ion binding"/>
    <property type="evidence" value="ECO:0007669"/>
    <property type="project" value="UniProtKB-KW"/>
</dbReference>
<dbReference type="GO" id="GO:0002183">
    <property type="term" value="P:cytoplasmic translational initiation"/>
    <property type="evidence" value="ECO:0000250"/>
    <property type="project" value="UniProtKB"/>
</dbReference>
<dbReference type="GO" id="GO:0001701">
    <property type="term" value="P:in utero embryonic development"/>
    <property type="evidence" value="ECO:0000315"/>
    <property type="project" value="MGI"/>
</dbReference>
<dbReference type="GO" id="GO:0002176">
    <property type="term" value="P:male germ cell proliferation"/>
    <property type="evidence" value="ECO:0000315"/>
    <property type="project" value="MGI"/>
</dbReference>
<dbReference type="GO" id="GO:0008584">
    <property type="term" value="P:male gonad development"/>
    <property type="evidence" value="ECO:0000315"/>
    <property type="project" value="MGI"/>
</dbReference>
<dbReference type="FunFam" id="3.30.30.170:FF:000001">
    <property type="entry name" value="Eukaryotic translation initiation factor 2 subunit"/>
    <property type="match status" value="1"/>
</dbReference>
<dbReference type="Gene3D" id="3.30.30.170">
    <property type="match status" value="1"/>
</dbReference>
<dbReference type="InterPro" id="IPR045196">
    <property type="entry name" value="IF2/IF5"/>
</dbReference>
<dbReference type="InterPro" id="IPR002735">
    <property type="entry name" value="Transl_init_fac_IF2/IF5_dom"/>
</dbReference>
<dbReference type="InterPro" id="IPR016189">
    <property type="entry name" value="Transl_init_fac_IF2/IF5_N"/>
</dbReference>
<dbReference type="InterPro" id="IPR016190">
    <property type="entry name" value="Transl_init_fac_IF2/IF5_Zn-bd"/>
</dbReference>
<dbReference type="PANTHER" id="PTHR23001">
    <property type="entry name" value="EUKARYOTIC TRANSLATION INITIATION FACTOR"/>
    <property type="match status" value="1"/>
</dbReference>
<dbReference type="PANTHER" id="PTHR23001:SF3">
    <property type="entry name" value="EUKARYOTIC TRANSLATION INITIATION FACTOR 2 SUBUNIT 2"/>
    <property type="match status" value="1"/>
</dbReference>
<dbReference type="Pfam" id="PF01873">
    <property type="entry name" value="eIF-5_eIF-2B"/>
    <property type="match status" value="1"/>
</dbReference>
<dbReference type="SMART" id="SM00653">
    <property type="entry name" value="eIF2B_5"/>
    <property type="match status" value="1"/>
</dbReference>
<dbReference type="SUPFAM" id="SSF100966">
    <property type="entry name" value="Translation initiation factor 2 beta, aIF2beta, N-terminal domain"/>
    <property type="match status" value="1"/>
</dbReference>
<dbReference type="SUPFAM" id="SSF75689">
    <property type="entry name" value="Zinc-binding domain of translation initiation factor 2 beta"/>
    <property type="match status" value="1"/>
</dbReference>
<evidence type="ECO:0000250" key="1">
    <source>
        <dbReference type="UniProtKB" id="P05198"/>
    </source>
</evidence>
<evidence type="ECO:0000250" key="2">
    <source>
        <dbReference type="UniProtKB" id="P20042"/>
    </source>
</evidence>
<evidence type="ECO:0000250" key="3">
    <source>
        <dbReference type="UniProtKB" id="P41035"/>
    </source>
</evidence>
<evidence type="ECO:0000250" key="4">
    <source>
        <dbReference type="UniProtKB" id="P56329"/>
    </source>
</evidence>
<evidence type="ECO:0000255" key="5"/>
<evidence type="ECO:0000256" key="6">
    <source>
        <dbReference type="SAM" id="MobiDB-lite"/>
    </source>
</evidence>
<evidence type="ECO:0000269" key="7">
    <source>
    </source>
</evidence>
<evidence type="ECO:0000305" key="8"/>
<evidence type="ECO:0007744" key="9">
    <source>
    </source>
</evidence>
<evidence type="ECO:0007744" key="10">
    <source>
    </source>
</evidence>
<sequence length="331" mass="38092">MSGDEMIFDPTMSKKKKKKKKPFMLDEEGDAQTEETQPSETKEVEPEPTEEKDVDADEEDSRKKDASDDLDDLNFFNQKKKKKKTKKIFDIDEAEEAIKDVKIESDAQEPAEPEDDLDIMLGNKKKKKKNVKFPEEDEILEKDEALEDEDSKKDDGISFSSQTAWAGSERDYTYEELLNRVFNIMREKNPDMVAGEKRKFVMKPPQVVRVGTKKTSFVNFTDICKLLHRQPKHLLAFLLAELGTSGSIDGNNQLVIKGRFQQKQIENVLRRYIKEYVTCHTCRSPDTILQKDTRLYFLQCETCHSRCSVASIKTGFQAVTGKRAQLRAKAN</sequence>
<comment type="function">
    <text evidence="1">Component of the eIF2 complex that functions in the early steps of protein synthesis by forming a ternary complex with GTP and initiator tRNA. This complex binds to a 40S ribosomal subunit, followed by mRNA binding to form the 43S pre-initiation complex (43S PIC). Junction of the 60S ribosomal subunit to form the 80S initiation complex is preceded by hydrolysis of the GTP bound to eIF2 and release of an eIF2-GDP binary complex. In order for eIF2 to recycle and catalyze another round of initiation, the GDP bound to eIF2 must exchange with GTP by way of a reaction catalyzed by eIF2B.</text>
</comment>
<comment type="subunit">
    <text evidence="2 7">Eukaryotic translation initiation factor 2 eIF2 is a heterotrimeric complex composed of an alpha (EIF2S1), a beta (EIF2S2) and a gamma (EIF2S3) chain (PubMed:16931514). eIF2 is member of the 43S pre-initiation complex (43S PIC). eIF2 forms a complex with at least CELF1/CUGBP1, CALR, CALR3, EIF2S1, EIF2S2, HSP90B1 and HSPA5 (PubMed:16931514). Interacts with BZW2/5MP1 (By similarity). Interacts with EIF5 (By similarity).</text>
</comment>
<comment type="subcellular location">
    <subcellularLocation>
        <location evidence="4">Cytoplasm</location>
        <location evidence="4">Cytosol</location>
    </subcellularLocation>
</comment>
<comment type="similarity">
    <text evidence="8">Belongs to the eIF-2-beta/eIF-5 family.</text>
</comment>
<comment type="sequence caution" evidence="8">
    <conflict type="erroneous initiation">
        <sequence resource="EMBL-CDS" id="BAB28490"/>
    </conflict>
    <text>Extended N-terminus.</text>
</comment>
<name>IF2B_MOUSE</name>
<accession>Q99L45</accession>
<accession>Q9CSH6</accession>
<accession>Q9CT12</accession>
<gene>
    <name type="primary">Eif2s2</name>
</gene>
<keyword id="KW-0007">Acetylation</keyword>
<keyword id="KW-0963">Cytoplasm</keyword>
<keyword id="KW-0396">Initiation factor</keyword>
<keyword id="KW-1017">Isopeptide bond</keyword>
<keyword id="KW-0479">Metal-binding</keyword>
<keyword id="KW-0597">Phosphoprotein</keyword>
<keyword id="KW-0648">Protein biosynthesis</keyword>
<keyword id="KW-1185">Reference proteome</keyword>
<keyword id="KW-0832">Ubl conjugation</keyword>
<keyword id="KW-0862">Zinc</keyword>
<keyword id="KW-0863">Zinc-finger</keyword>
<protein>
    <recommendedName>
        <fullName>Eukaryotic translation initiation factor 2 subunit 2</fullName>
    </recommendedName>
    <alternativeName>
        <fullName>Eukaryotic translation initiation factor 2 subunit beta</fullName>
        <shortName>eIF2-beta</shortName>
    </alternativeName>
</protein>
<proteinExistence type="evidence at protein level"/>
<reference key="1">
    <citation type="journal article" date="2005" name="Science">
        <title>The transcriptional landscape of the mammalian genome.</title>
        <authorList>
            <person name="Carninci P."/>
            <person name="Kasukawa T."/>
            <person name="Katayama S."/>
            <person name="Gough J."/>
            <person name="Frith M.C."/>
            <person name="Maeda N."/>
            <person name="Oyama R."/>
            <person name="Ravasi T."/>
            <person name="Lenhard B."/>
            <person name="Wells C."/>
            <person name="Kodzius R."/>
            <person name="Shimokawa K."/>
            <person name="Bajic V.B."/>
            <person name="Brenner S.E."/>
            <person name="Batalov S."/>
            <person name="Forrest A.R."/>
            <person name="Zavolan M."/>
            <person name="Davis M.J."/>
            <person name="Wilming L.G."/>
            <person name="Aidinis V."/>
            <person name="Allen J.E."/>
            <person name="Ambesi-Impiombato A."/>
            <person name="Apweiler R."/>
            <person name="Aturaliya R.N."/>
            <person name="Bailey T.L."/>
            <person name="Bansal M."/>
            <person name="Baxter L."/>
            <person name="Beisel K.W."/>
            <person name="Bersano T."/>
            <person name="Bono H."/>
            <person name="Chalk A.M."/>
            <person name="Chiu K.P."/>
            <person name="Choudhary V."/>
            <person name="Christoffels A."/>
            <person name="Clutterbuck D.R."/>
            <person name="Crowe M.L."/>
            <person name="Dalla E."/>
            <person name="Dalrymple B.P."/>
            <person name="de Bono B."/>
            <person name="Della Gatta G."/>
            <person name="di Bernardo D."/>
            <person name="Down T."/>
            <person name="Engstrom P."/>
            <person name="Fagiolini M."/>
            <person name="Faulkner G."/>
            <person name="Fletcher C.F."/>
            <person name="Fukushima T."/>
            <person name="Furuno M."/>
            <person name="Futaki S."/>
            <person name="Gariboldi M."/>
            <person name="Georgii-Hemming P."/>
            <person name="Gingeras T.R."/>
            <person name="Gojobori T."/>
            <person name="Green R.E."/>
            <person name="Gustincich S."/>
            <person name="Harbers M."/>
            <person name="Hayashi Y."/>
            <person name="Hensch T.K."/>
            <person name="Hirokawa N."/>
            <person name="Hill D."/>
            <person name="Huminiecki L."/>
            <person name="Iacono M."/>
            <person name="Ikeo K."/>
            <person name="Iwama A."/>
            <person name="Ishikawa T."/>
            <person name="Jakt M."/>
            <person name="Kanapin A."/>
            <person name="Katoh M."/>
            <person name="Kawasawa Y."/>
            <person name="Kelso J."/>
            <person name="Kitamura H."/>
            <person name="Kitano H."/>
            <person name="Kollias G."/>
            <person name="Krishnan S.P."/>
            <person name="Kruger A."/>
            <person name="Kummerfeld S.K."/>
            <person name="Kurochkin I.V."/>
            <person name="Lareau L.F."/>
            <person name="Lazarevic D."/>
            <person name="Lipovich L."/>
            <person name="Liu J."/>
            <person name="Liuni S."/>
            <person name="McWilliam S."/>
            <person name="Madan Babu M."/>
            <person name="Madera M."/>
            <person name="Marchionni L."/>
            <person name="Matsuda H."/>
            <person name="Matsuzawa S."/>
            <person name="Miki H."/>
            <person name="Mignone F."/>
            <person name="Miyake S."/>
            <person name="Morris K."/>
            <person name="Mottagui-Tabar S."/>
            <person name="Mulder N."/>
            <person name="Nakano N."/>
            <person name="Nakauchi H."/>
            <person name="Ng P."/>
            <person name="Nilsson R."/>
            <person name="Nishiguchi S."/>
            <person name="Nishikawa S."/>
            <person name="Nori F."/>
            <person name="Ohara O."/>
            <person name="Okazaki Y."/>
            <person name="Orlando V."/>
            <person name="Pang K.C."/>
            <person name="Pavan W.J."/>
            <person name="Pavesi G."/>
            <person name="Pesole G."/>
            <person name="Petrovsky N."/>
            <person name="Piazza S."/>
            <person name="Reed J."/>
            <person name="Reid J.F."/>
            <person name="Ring B.Z."/>
            <person name="Ringwald M."/>
            <person name="Rost B."/>
            <person name="Ruan Y."/>
            <person name="Salzberg S.L."/>
            <person name="Sandelin A."/>
            <person name="Schneider C."/>
            <person name="Schoenbach C."/>
            <person name="Sekiguchi K."/>
            <person name="Semple C.A."/>
            <person name="Seno S."/>
            <person name="Sessa L."/>
            <person name="Sheng Y."/>
            <person name="Shibata Y."/>
            <person name="Shimada H."/>
            <person name="Shimada K."/>
            <person name="Silva D."/>
            <person name="Sinclair B."/>
            <person name="Sperling S."/>
            <person name="Stupka E."/>
            <person name="Sugiura K."/>
            <person name="Sultana R."/>
            <person name="Takenaka Y."/>
            <person name="Taki K."/>
            <person name="Tammoja K."/>
            <person name="Tan S.L."/>
            <person name="Tang S."/>
            <person name="Taylor M.S."/>
            <person name="Tegner J."/>
            <person name="Teichmann S.A."/>
            <person name="Ueda H.R."/>
            <person name="van Nimwegen E."/>
            <person name="Verardo R."/>
            <person name="Wei C.L."/>
            <person name="Yagi K."/>
            <person name="Yamanishi H."/>
            <person name="Zabarovsky E."/>
            <person name="Zhu S."/>
            <person name="Zimmer A."/>
            <person name="Hide W."/>
            <person name="Bult C."/>
            <person name="Grimmond S.M."/>
            <person name="Teasdale R.D."/>
            <person name="Liu E.T."/>
            <person name="Brusic V."/>
            <person name="Quackenbush J."/>
            <person name="Wahlestedt C."/>
            <person name="Mattick J.S."/>
            <person name="Hume D.A."/>
            <person name="Kai C."/>
            <person name="Sasaki D."/>
            <person name="Tomaru Y."/>
            <person name="Fukuda S."/>
            <person name="Kanamori-Katayama M."/>
            <person name="Suzuki M."/>
            <person name="Aoki J."/>
            <person name="Arakawa T."/>
            <person name="Iida J."/>
            <person name="Imamura K."/>
            <person name="Itoh M."/>
            <person name="Kato T."/>
            <person name="Kawaji H."/>
            <person name="Kawagashira N."/>
            <person name="Kawashima T."/>
            <person name="Kojima M."/>
            <person name="Kondo S."/>
            <person name="Konno H."/>
            <person name="Nakano K."/>
            <person name="Ninomiya N."/>
            <person name="Nishio T."/>
            <person name="Okada M."/>
            <person name="Plessy C."/>
            <person name="Shibata K."/>
            <person name="Shiraki T."/>
            <person name="Suzuki S."/>
            <person name="Tagami M."/>
            <person name="Waki K."/>
            <person name="Watahiki A."/>
            <person name="Okamura-Oho Y."/>
            <person name="Suzuki H."/>
            <person name="Kawai J."/>
            <person name="Hayashizaki Y."/>
        </authorList>
    </citation>
    <scope>NUCLEOTIDE SEQUENCE [LARGE SCALE MRNA]</scope>
    <source>
        <strain>C57BL/6J</strain>
        <tissue>Embryo</tissue>
    </source>
</reference>
<reference key="2">
    <citation type="journal article" date="2004" name="Genome Res.">
        <title>The status, quality, and expansion of the NIH full-length cDNA project: the Mammalian Gene Collection (MGC).</title>
        <authorList>
            <consortium name="The MGC Project Team"/>
        </authorList>
    </citation>
    <scope>NUCLEOTIDE SEQUENCE [LARGE SCALE MRNA]</scope>
    <source>
        <strain>FVB/N</strain>
        <tissue>Mammary gland</tissue>
    </source>
</reference>
<reference key="3">
    <citation type="journal article" date="2006" name="J. Biol. Chem.">
        <title>Age-specific CUGBP1-eIF2 complex increases translation of CCAAT/enhancer-binding protein beta in old liver.</title>
        <authorList>
            <person name="Timchenko L.T."/>
            <person name="Salisbury E."/>
            <person name="Wang G.-L."/>
            <person name="Nguyen H."/>
            <person name="Albrecht J.H."/>
            <person name="Hershey J.W."/>
            <person name="Timchenko N.A."/>
        </authorList>
    </citation>
    <scope>IDENTIFICATION IN AN EIF2 COMPLEX WITH EIF2S1; CELF1; CALR; CALR3; HSPA5 AND HSP90B1</scope>
</reference>
<reference key="4">
    <citation type="journal article" date="2007" name="Proc. Natl. Acad. Sci. U.S.A.">
        <title>Large-scale phosphorylation analysis of mouse liver.</title>
        <authorList>
            <person name="Villen J."/>
            <person name="Beausoleil S.A."/>
            <person name="Gerber S.A."/>
            <person name="Gygi S.P."/>
        </authorList>
    </citation>
    <scope>PHOSPHORYLATION [LARGE SCALE ANALYSIS] AT SER-105</scope>
    <scope>IDENTIFICATION BY MASS SPECTROMETRY [LARGE SCALE ANALYSIS]</scope>
    <source>
        <tissue>Liver</tissue>
    </source>
</reference>
<reference key="5">
    <citation type="journal article" date="2010" name="Cell">
        <title>A tissue-specific atlas of mouse protein phosphorylation and expression.</title>
        <authorList>
            <person name="Huttlin E.L."/>
            <person name="Jedrychowski M.P."/>
            <person name="Elias J.E."/>
            <person name="Goswami T."/>
            <person name="Rad R."/>
            <person name="Beausoleil S.A."/>
            <person name="Villen J."/>
            <person name="Haas W."/>
            <person name="Sowa M.E."/>
            <person name="Gygi S.P."/>
        </authorList>
    </citation>
    <scope>PHOSPHORYLATION [LARGE SCALE ANALYSIS] AT SER-67</scope>
    <scope>IDENTIFICATION BY MASS SPECTROMETRY [LARGE SCALE ANALYSIS]</scope>
    <source>
        <tissue>Brain</tissue>
        <tissue>Brown adipose tissue</tissue>
        <tissue>Kidney</tissue>
        <tissue>Liver</tissue>
        <tissue>Lung</tissue>
        <tissue>Pancreas</tissue>
        <tissue>Spleen</tissue>
        <tissue>Testis</tissue>
    </source>
</reference>
<feature type="initiator methionine" description="Removed" evidence="2">
    <location>
        <position position="1"/>
    </location>
</feature>
<feature type="chain" id="PRO_0000137407" description="Eukaryotic translation initiation factor 2 subunit 2">
    <location>
        <begin position="2"/>
        <end position="331"/>
    </location>
</feature>
<feature type="zinc finger region" description="C4-type" evidence="5">
    <location>
        <begin position="279"/>
        <end position="303"/>
    </location>
</feature>
<feature type="region of interest" description="Disordered" evidence="6">
    <location>
        <begin position="1"/>
        <end position="75"/>
    </location>
</feature>
<feature type="region of interest" description="Disordered" evidence="6">
    <location>
        <begin position="97"/>
        <end position="120"/>
    </location>
</feature>
<feature type="compositionally biased region" description="Basic residues" evidence="6">
    <location>
        <begin position="13"/>
        <end position="22"/>
    </location>
</feature>
<feature type="compositionally biased region" description="Basic and acidic residues" evidence="6">
    <location>
        <begin position="40"/>
        <end position="51"/>
    </location>
</feature>
<feature type="compositionally biased region" description="Acidic residues" evidence="6">
    <location>
        <begin position="106"/>
        <end position="118"/>
    </location>
</feature>
<feature type="modified residue" description="N-acetylserine" evidence="2">
    <location>
        <position position="2"/>
    </location>
</feature>
<feature type="modified residue" description="Phosphoserine" evidence="2">
    <location>
        <position position="2"/>
    </location>
</feature>
<feature type="modified residue" description="Phosphoserine" evidence="3">
    <location>
        <position position="13"/>
    </location>
</feature>
<feature type="modified residue" description="Phosphothreonine" evidence="2">
    <location>
        <position position="36"/>
    </location>
</feature>
<feature type="modified residue" description="Phosphoserine" evidence="10">
    <location>
        <position position="67"/>
    </location>
</feature>
<feature type="modified residue" description="Phosphoserine" evidence="9">
    <location>
        <position position="105"/>
    </location>
</feature>
<feature type="modified residue" description="Phosphoserine" evidence="2">
    <location>
        <position position="158"/>
    </location>
</feature>
<feature type="modified residue" description="Phosphoserine" evidence="3">
    <location>
        <position position="216"/>
    </location>
</feature>
<feature type="modified residue" description="N6-acetyllysine" evidence="2">
    <location>
        <position position="263"/>
    </location>
</feature>
<feature type="modified residue" description="N6-acetyllysine" evidence="2">
    <location>
        <position position="291"/>
    </location>
</feature>
<feature type="cross-link" description="Glycyl lysine isopeptide (Lys-Gly) (interchain with G-Cter in SUMO2)" evidence="2">
    <location>
        <position position="102"/>
    </location>
</feature>